<keyword id="KW-1003">Cell membrane</keyword>
<keyword id="KW-0963">Cytoplasm</keyword>
<keyword id="KW-0217">Developmental protein</keyword>
<keyword id="KW-1015">Disulfide bond</keyword>
<keyword id="KW-0967">Endosome</keyword>
<keyword id="KW-0297">G-protein coupled receptor</keyword>
<keyword id="KW-0306">Gastrulation</keyword>
<keyword id="KW-0325">Glycoprotein</keyword>
<keyword id="KW-0458">Lysosome</keyword>
<keyword id="KW-0472">Membrane</keyword>
<keyword id="KW-0539">Nucleus</keyword>
<keyword id="KW-0675">Receptor</keyword>
<keyword id="KW-1185">Reference proteome</keyword>
<keyword id="KW-0765">Sulfation</keyword>
<keyword id="KW-0807">Transducer</keyword>
<keyword id="KW-0812">Transmembrane</keyword>
<keyword id="KW-1133">Transmembrane helix</keyword>
<accession>Q7ZXJ7</accession>
<sequence>MDGFSGGIDINIFDGNSTENGSGDFEDFIEPCFMQENSDFNRIFLPTIYSFIFLLGIIGNGLVVVVMGYQKKSRTMTDKYRLHLSVADLLFVFTLPFWSVDAAIGWYFKEFLCKAVHVIYTVNLYSSVLILAFISLDRYLAIVHATNSQGSRKMLADKVVYAGVWLPALLLTVPDLVFASVSNENGQFVCDRIYPIDNRETWTVGFRFLHITVGLILPGLIILVCYCVIISKLSHSKGHQKRKALKTTVILILAFFACWLPYYVCLTTDTFMMLGLVKADCIWENTLHKAISITEALAFFHCCLNPILYAFLGAKFKKSAQNAFTSVSRGSSLKILSKKRAGLSSVSTESESSSFHSS</sequence>
<name>CXR4B_XENLA</name>
<reference evidence="7" key="1">
    <citation type="submission" date="2005-12" db="EMBL/GenBank/DDBJ databases">
        <authorList>
            <consortium name="NIH - Xenopus Gene Collection (XGC) project"/>
        </authorList>
    </citation>
    <scope>NUCLEOTIDE SEQUENCE [LARGE SCALE MRNA]</scope>
    <source>
        <tissue evidence="7">Embryo</tissue>
    </source>
</reference>
<evidence type="ECO:0000250" key="1"/>
<evidence type="ECO:0000250" key="2">
    <source>
        <dbReference type="UniProtKB" id="P61073"/>
    </source>
</evidence>
<evidence type="ECO:0000250" key="3">
    <source>
        <dbReference type="UniProtKB" id="Q9YGC3"/>
    </source>
</evidence>
<evidence type="ECO:0000255" key="4"/>
<evidence type="ECO:0000255" key="5">
    <source>
        <dbReference type="PROSITE-ProRule" id="PRU00521"/>
    </source>
</evidence>
<evidence type="ECO:0000256" key="6">
    <source>
        <dbReference type="SAM" id="MobiDB-lite"/>
    </source>
</evidence>
<evidence type="ECO:0000312" key="7">
    <source>
        <dbReference type="EMBL" id="AAH44963.1"/>
    </source>
</evidence>
<feature type="chain" id="PRO_0000379453" description="C-X-C chemokine receptor type 4-B">
    <location>
        <begin position="1"/>
        <end position="358"/>
    </location>
</feature>
<feature type="topological domain" description="Extracellular" evidence="1">
    <location>
        <begin position="1"/>
        <end position="44"/>
    </location>
</feature>
<feature type="transmembrane region" description="Helical; Name=1" evidence="1">
    <location>
        <begin position="45"/>
        <end position="67"/>
    </location>
</feature>
<feature type="topological domain" description="Cytoplasmic" evidence="1">
    <location>
        <begin position="68"/>
        <end position="81"/>
    </location>
</feature>
<feature type="transmembrane region" description="Helical; Name=2" evidence="1">
    <location>
        <begin position="82"/>
        <end position="103"/>
    </location>
</feature>
<feature type="topological domain" description="Extracellular" evidence="1">
    <location>
        <begin position="104"/>
        <end position="114"/>
    </location>
</feature>
<feature type="transmembrane region" description="Helical; Name=3" evidence="1">
    <location>
        <begin position="115"/>
        <end position="134"/>
    </location>
</feature>
<feature type="topological domain" description="Cytoplasmic" evidence="1">
    <location>
        <begin position="135"/>
        <end position="158"/>
    </location>
</feature>
<feature type="transmembrane region" description="Helical; Name=4" evidence="1">
    <location>
        <begin position="159"/>
        <end position="178"/>
    </location>
</feature>
<feature type="topological domain" description="Extracellular" evidence="1">
    <location>
        <begin position="179"/>
        <end position="202"/>
    </location>
</feature>
<feature type="transmembrane region" description="Helical; Name=5" evidence="1">
    <location>
        <begin position="203"/>
        <end position="223"/>
    </location>
</feature>
<feature type="topological domain" description="Cytoplasmic" evidence="1">
    <location>
        <begin position="224"/>
        <end position="248"/>
    </location>
</feature>
<feature type="transmembrane region" description="Helical; Name=6" evidence="1">
    <location>
        <begin position="249"/>
        <end position="268"/>
    </location>
</feature>
<feature type="topological domain" description="Extracellular" evidence="1">
    <location>
        <begin position="269"/>
        <end position="289"/>
    </location>
</feature>
<feature type="transmembrane region" description="Helical; Name=7" evidence="1">
    <location>
        <begin position="290"/>
        <end position="309"/>
    </location>
</feature>
<feature type="topological domain" description="Cytoplasmic" evidence="1">
    <location>
        <begin position="310"/>
        <end position="358"/>
    </location>
</feature>
<feature type="region of interest" description="Important for chemokine binding and signaling" evidence="1">
    <location>
        <begin position="1"/>
        <end position="25"/>
    </location>
</feature>
<feature type="region of interest" description="Chemokine binding" evidence="1">
    <location>
        <begin position="98"/>
        <end position="101"/>
    </location>
</feature>
<feature type="region of interest" description="Chemokine binding" evidence="1">
    <location>
        <begin position="117"/>
        <end position="121"/>
    </location>
</feature>
<feature type="region of interest" description="Involved in dimerization; when bound to chemokine" evidence="1">
    <location>
        <begin position="139"/>
        <end position="151"/>
    </location>
</feature>
<feature type="region of interest" description="Chemokine binding, important for signaling" evidence="1">
    <location>
        <begin position="190"/>
        <end position="194"/>
    </location>
</feature>
<feature type="region of interest" description="Disordered" evidence="6">
    <location>
        <begin position="338"/>
        <end position="358"/>
    </location>
</feature>
<feature type="compositionally biased region" description="Low complexity" evidence="6">
    <location>
        <begin position="344"/>
        <end position="358"/>
    </location>
</feature>
<feature type="site" description="Chemokine binding" evidence="1">
    <location>
        <position position="175"/>
    </location>
</feature>
<feature type="site" description="Chemokine binding" evidence="1">
    <location>
        <position position="295"/>
    </location>
</feature>
<feature type="glycosylation site" description="N-linked (GlcNAc...) asparagine" evidence="4">
    <location>
        <position position="16"/>
    </location>
</feature>
<feature type="glycosylation site" description="N-linked (GlcNAc...) asparagine" evidence="4">
    <location>
        <position position="20"/>
    </location>
</feature>
<feature type="disulfide bond" evidence="5">
    <location>
        <begin position="32"/>
        <end position="281"/>
    </location>
</feature>
<feature type="disulfide bond" evidence="5">
    <location>
        <begin position="113"/>
        <end position="190"/>
    </location>
</feature>
<gene>
    <name type="primary">cxcr4-b</name>
    <name type="synonym">cxcr4</name>
</gene>
<proteinExistence type="evidence at transcript level"/>
<organism>
    <name type="scientific">Xenopus laevis</name>
    <name type="common">African clawed frog</name>
    <dbReference type="NCBI Taxonomy" id="8355"/>
    <lineage>
        <taxon>Eukaryota</taxon>
        <taxon>Metazoa</taxon>
        <taxon>Chordata</taxon>
        <taxon>Craniata</taxon>
        <taxon>Vertebrata</taxon>
        <taxon>Euteleostomi</taxon>
        <taxon>Amphibia</taxon>
        <taxon>Batrachia</taxon>
        <taxon>Anura</taxon>
        <taxon>Pipoidea</taxon>
        <taxon>Pipidae</taxon>
        <taxon>Xenopodinae</taxon>
        <taxon>Xenopus</taxon>
        <taxon>Xenopus</taxon>
    </lineage>
</organism>
<comment type="function">
    <text evidence="1">Receptor for the C-X-C chemokine cxcl12/sdf-1. Transduces a signal by increasing the intracellular level of calcium ions. Signaling with cxcl12/sdf-1 mediates the directional movement of mesodermal cells during gastrulation. May play a role in the migration of embryonic presumptive primordial germ cells (pPGCs). May also be involved in regulating migration of hematopoietic stem cells into the larval liver (By similarity).</text>
</comment>
<comment type="subunit">
    <text evidence="2">Monomer. Can form dimers (By similarity).</text>
</comment>
<comment type="subcellular location">
    <subcellularLocation>
        <location evidence="4">Cell membrane</location>
        <topology evidence="4">Multi-pass membrane protein</topology>
    </subcellularLocation>
    <subcellularLocation>
        <location evidence="3 4">Cytoplasm</location>
    </subcellularLocation>
    <subcellularLocation>
        <location evidence="3 4">Nucleus</location>
    </subcellularLocation>
    <subcellularLocation>
        <location evidence="1">Early endosome</location>
    </subcellularLocation>
    <subcellularLocation>
        <location evidence="1">Late endosome</location>
    </subcellularLocation>
    <subcellularLocation>
        <location evidence="1">Lysosome</location>
    </subcellularLocation>
    <text evidence="3 4">Expressed in the cytoplasm of a small number of embryonic pPGCs from stage 24. Expressed in the nucleus of 3 lateral pPGCs (By similarity).</text>
</comment>
<comment type="PTM">
    <text evidence="2">Sulfation is required for efficient binding of cxcl12/sdf-1alpha and promotes its dimerization.</text>
</comment>
<comment type="PTM">
    <text evidence="2">O- and N-glycosylated.</text>
</comment>
<comment type="similarity">
    <text evidence="5">Belongs to the G-protein coupled receptor 1 family.</text>
</comment>
<dbReference type="EMBL" id="BC044963">
    <property type="protein sequence ID" value="AAH44963.1"/>
    <property type="molecule type" value="mRNA"/>
</dbReference>
<dbReference type="EMBL" id="BC110721">
    <property type="protein sequence ID" value="AAI10722.1"/>
    <property type="molecule type" value="mRNA"/>
</dbReference>
<dbReference type="RefSeq" id="NP_001080681.1">
    <property type="nucleotide sequence ID" value="NM_001087212.1"/>
</dbReference>
<dbReference type="SMR" id="Q7ZXJ7"/>
<dbReference type="GlyCosmos" id="Q7ZXJ7">
    <property type="glycosylation" value="2 sites, No reported glycans"/>
</dbReference>
<dbReference type="DNASU" id="380373"/>
<dbReference type="GeneID" id="380373"/>
<dbReference type="KEGG" id="xla:380373"/>
<dbReference type="AGR" id="Xenbase:XB-GENE-6256540"/>
<dbReference type="CTD" id="380373"/>
<dbReference type="Xenbase" id="XB-GENE-6256540">
    <property type="gene designation" value="cxcr4.S"/>
</dbReference>
<dbReference type="OMA" id="YVCQRFY"/>
<dbReference type="OrthoDB" id="8413490at2759"/>
<dbReference type="Proteomes" id="UP000186698">
    <property type="component" value="Chromosome 9_10S"/>
</dbReference>
<dbReference type="Bgee" id="380373">
    <property type="expression patterns" value="Expressed in gastrula and 19 other cell types or tissues"/>
</dbReference>
<dbReference type="GO" id="GO:0005769">
    <property type="term" value="C:early endosome"/>
    <property type="evidence" value="ECO:0000250"/>
    <property type="project" value="UniProtKB"/>
</dbReference>
<dbReference type="GO" id="GO:0009897">
    <property type="term" value="C:external side of plasma membrane"/>
    <property type="evidence" value="ECO:0000318"/>
    <property type="project" value="GO_Central"/>
</dbReference>
<dbReference type="GO" id="GO:0005770">
    <property type="term" value="C:late endosome"/>
    <property type="evidence" value="ECO:0000250"/>
    <property type="project" value="UniProtKB"/>
</dbReference>
<dbReference type="GO" id="GO:0005764">
    <property type="term" value="C:lysosome"/>
    <property type="evidence" value="ECO:0000250"/>
    <property type="project" value="UniProtKB"/>
</dbReference>
<dbReference type="GO" id="GO:0005634">
    <property type="term" value="C:nucleus"/>
    <property type="evidence" value="ECO:0007669"/>
    <property type="project" value="UniProtKB-SubCell"/>
</dbReference>
<dbReference type="GO" id="GO:0005886">
    <property type="term" value="C:plasma membrane"/>
    <property type="evidence" value="ECO:0000250"/>
    <property type="project" value="UniProtKB"/>
</dbReference>
<dbReference type="GO" id="GO:0019957">
    <property type="term" value="F:C-C chemokine binding"/>
    <property type="evidence" value="ECO:0000318"/>
    <property type="project" value="GO_Central"/>
</dbReference>
<dbReference type="GO" id="GO:0016493">
    <property type="term" value="F:C-C chemokine receptor activity"/>
    <property type="evidence" value="ECO:0000318"/>
    <property type="project" value="GO_Central"/>
</dbReference>
<dbReference type="GO" id="GO:0016494">
    <property type="term" value="F:C-X-C chemokine receptor activity"/>
    <property type="evidence" value="ECO:0000250"/>
    <property type="project" value="UniProtKB"/>
</dbReference>
<dbReference type="GO" id="GO:0007420">
    <property type="term" value="P:brain development"/>
    <property type="evidence" value="ECO:0000318"/>
    <property type="project" value="GO_Central"/>
</dbReference>
<dbReference type="GO" id="GO:0019722">
    <property type="term" value="P:calcium-mediated signaling"/>
    <property type="evidence" value="ECO:0000318"/>
    <property type="project" value="GO_Central"/>
</dbReference>
<dbReference type="GO" id="GO:0060326">
    <property type="term" value="P:cell chemotaxis"/>
    <property type="evidence" value="ECO:0000318"/>
    <property type="project" value="GO_Central"/>
</dbReference>
<dbReference type="GO" id="GO:0071345">
    <property type="term" value="P:cellular response to cytokine stimulus"/>
    <property type="evidence" value="ECO:0000250"/>
    <property type="project" value="UniProtKB"/>
</dbReference>
<dbReference type="GO" id="GO:0060216">
    <property type="term" value="P:definitive hemopoiesis"/>
    <property type="evidence" value="ECO:0000250"/>
    <property type="project" value="UniProtKB"/>
</dbReference>
<dbReference type="GO" id="GO:0007186">
    <property type="term" value="P:G protein-coupled receptor signaling pathway"/>
    <property type="evidence" value="ECO:0000250"/>
    <property type="project" value="UniProtKB"/>
</dbReference>
<dbReference type="GO" id="GO:0008354">
    <property type="term" value="P:germ cell migration"/>
    <property type="evidence" value="ECO:0000250"/>
    <property type="project" value="UniProtKB"/>
</dbReference>
<dbReference type="GO" id="GO:0006955">
    <property type="term" value="P:immune response"/>
    <property type="evidence" value="ECO:0000318"/>
    <property type="project" value="GO_Central"/>
</dbReference>
<dbReference type="GO" id="GO:0007509">
    <property type="term" value="P:mesoderm migration involved in gastrulation"/>
    <property type="evidence" value="ECO:0000250"/>
    <property type="project" value="UniProtKB"/>
</dbReference>
<dbReference type="GO" id="GO:0022008">
    <property type="term" value="P:neurogenesis"/>
    <property type="evidence" value="ECO:0000318"/>
    <property type="project" value="GO_Central"/>
</dbReference>
<dbReference type="GO" id="GO:0007204">
    <property type="term" value="P:positive regulation of cytosolic calcium ion concentration"/>
    <property type="evidence" value="ECO:0000318"/>
    <property type="project" value="GO_Central"/>
</dbReference>
<dbReference type="CDD" id="cd15179">
    <property type="entry name" value="7tmA_CXCR4"/>
    <property type="match status" value="1"/>
</dbReference>
<dbReference type="FunFam" id="1.20.1070.10:FF:000063">
    <property type="entry name" value="C-X-C chemokine receptor type 4"/>
    <property type="match status" value="1"/>
</dbReference>
<dbReference type="Gene3D" id="1.20.1070.10">
    <property type="entry name" value="Rhodopsin 7-helix transmembrane proteins"/>
    <property type="match status" value="1"/>
</dbReference>
<dbReference type="InterPro" id="IPR050119">
    <property type="entry name" value="CCR1-9-like"/>
</dbReference>
<dbReference type="InterPro" id="IPR022726">
    <property type="entry name" value="Chemokine_CXCR4_N_dom"/>
</dbReference>
<dbReference type="InterPro" id="IPR000355">
    <property type="entry name" value="Chemokine_rcpt"/>
</dbReference>
<dbReference type="InterPro" id="IPR001277">
    <property type="entry name" value="CXCR4/ACKR2"/>
</dbReference>
<dbReference type="InterPro" id="IPR000276">
    <property type="entry name" value="GPCR_Rhodpsn"/>
</dbReference>
<dbReference type="InterPro" id="IPR017452">
    <property type="entry name" value="GPCR_Rhodpsn_7TM"/>
</dbReference>
<dbReference type="PANTHER" id="PTHR10489:SF594">
    <property type="entry name" value="C-X-C CHEMOKINE RECEPTOR TYPE 4"/>
    <property type="match status" value="1"/>
</dbReference>
<dbReference type="PANTHER" id="PTHR10489">
    <property type="entry name" value="CELL ADHESION MOLECULE"/>
    <property type="match status" value="1"/>
</dbReference>
<dbReference type="Pfam" id="PF00001">
    <property type="entry name" value="7tm_1"/>
    <property type="match status" value="1"/>
</dbReference>
<dbReference type="Pfam" id="PF12109">
    <property type="entry name" value="CXCR4_N"/>
    <property type="match status" value="1"/>
</dbReference>
<dbReference type="PRINTS" id="PR00657">
    <property type="entry name" value="CCCHEMOKINER"/>
</dbReference>
<dbReference type="PRINTS" id="PR00645">
    <property type="entry name" value="CXCCHMKINER4"/>
</dbReference>
<dbReference type="PRINTS" id="PR00237">
    <property type="entry name" value="GPCRRHODOPSN"/>
</dbReference>
<dbReference type="SUPFAM" id="SSF81321">
    <property type="entry name" value="Family A G protein-coupled receptor-like"/>
    <property type="match status" value="1"/>
</dbReference>
<dbReference type="PROSITE" id="PS00237">
    <property type="entry name" value="G_PROTEIN_RECEP_F1_1"/>
    <property type="match status" value="1"/>
</dbReference>
<dbReference type="PROSITE" id="PS50262">
    <property type="entry name" value="G_PROTEIN_RECEP_F1_2"/>
    <property type="match status" value="1"/>
</dbReference>
<protein>
    <recommendedName>
        <fullName>C-X-C chemokine receptor type 4-B</fullName>
        <shortName>CXC-R4-B</shortName>
        <shortName>CXCR-4-B</shortName>
    </recommendedName>
    <alternativeName>
        <fullName>Stromal cell-derived factor 1 receptor B</fullName>
        <shortName>SDF-1 receptor B</shortName>
    </alternativeName>
</protein>